<sequence>MEEHRLGGGGGGGGGGGRPPIPGAAGRKLPGLSRHASFVRSPANSTKSGTEKTFENMDAVAYMPVVRSGGWADIGSRHTMEDVFICSDNLMKEFGVESFEDGPSAFYGVFDGHGGKHAADFVCSNLARFIVEDEDFPREIEKALSSAFLQTDAAFADACSVNSSLASGTTALAALVVGRSLLVANAGDCRAVLCCRGKAIEMSRDHKPSCNREKVRIEASGGYVYDGYLNGQLNVARAIGDWHMEGMKACDGLGPLSAEPEVMIRNLTEEDEFLIIGCDGIWDVFRSQNAVDFARRKLQEHNDPVTCCKELVDEAIKRKSGDNLSVVVICFNSRPPPVLTTPRPRVQRSISAEGLRELQSFLDSLAD</sequence>
<evidence type="ECO:0000250" key="1"/>
<evidence type="ECO:0000255" key="2">
    <source>
        <dbReference type="PROSITE-ProRule" id="PRU01082"/>
    </source>
</evidence>
<evidence type="ECO:0000256" key="3">
    <source>
        <dbReference type="SAM" id="MobiDB-lite"/>
    </source>
</evidence>
<evidence type="ECO:0000303" key="4">
    <source>
    </source>
</evidence>
<evidence type="ECO:0000305" key="5"/>
<evidence type="ECO:0000312" key="6">
    <source>
        <dbReference type="EMBL" id="EEE65966.1"/>
    </source>
</evidence>
<keyword id="KW-0025">Alternative splicing</keyword>
<keyword id="KW-0378">Hydrolase</keyword>
<keyword id="KW-0460">Magnesium</keyword>
<keyword id="KW-0464">Manganese</keyword>
<keyword id="KW-0479">Metal-binding</keyword>
<keyword id="KW-0904">Protein phosphatase</keyword>
<keyword id="KW-1185">Reference proteome</keyword>
<feature type="chain" id="PRO_0000363304" description="Probable protein phosphatase 2C 57">
    <location>
        <begin position="1"/>
        <end position="367"/>
    </location>
</feature>
<feature type="domain" description="PPM-type phosphatase" evidence="2">
    <location>
        <begin position="67"/>
        <end position="331"/>
    </location>
</feature>
<feature type="region of interest" description="Disordered" evidence="3">
    <location>
        <begin position="1"/>
        <end position="29"/>
    </location>
</feature>
<feature type="compositionally biased region" description="Gly residues" evidence="3">
    <location>
        <begin position="7"/>
        <end position="18"/>
    </location>
</feature>
<feature type="binding site" evidence="1">
    <location>
        <position position="111"/>
    </location>
    <ligand>
        <name>Mn(2+)</name>
        <dbReference type="ChEBI" id="CHEBI:29035"/>
        <label>1</label>
    </ligand>
</feature>
<feature type="binding site" evidence="1">
    <location>
        <position position="111"/>
    </location>
    <ligand>
        <name>Mn(2+)</name>
        <dbReference type="ChEBI" id="CHEBI:29035"/>
        <label>2</label>
    </ligand>
</feature>
<feature type="binding site" evidence="1">
    <location>
        <position position="112"/>
    </location>
    <ligand>
        <name>Mn(2+)</name>
        <dbReference type="ChEBI" id="CHEBI:29035"/>
        <label>1</label>
    </ligand>
</feature>
<feature type="binding site" evidence="1">
    <location>
        <position position="279"/>
    </location>
    <ligand>
        <name>Mn(2+)</name>
        <dbReference type="ChEBI" id="CHEBI:29035"/>
        <label>2</label>
    </ligand>
</feature>
<feature type="binding site" evidence="1">
    <location>
        <position position="322"/>
    </location>
    <ligand>
        <name>Mn(2+)</name>
        <dbReference type="ChEBI" id="CHEBI:29035"/>
        <label>2</label>
    </ligand>
</feature>
<feature type="splice variant" id="VSP_036275" description="In isoform 2." evidence="4">
    <location>
        <begin position="1"/>
        <end position="56"/>
    </location>
</feature>
<reference key="1">
    <citation type="journal article" date="2005" name="Nature">
        <title>The map-based sequence of the rice genome.</title>
        <authorList>
            <consortium name="International rice genome sequencing project (IRGSP)"/>
        </authorList>
    </citation>
    <scope>NUCLEOTIDE SEQUENCE [LARGE SCALE GENOMIC DNA]</scope>
    <source>
        <strain>cv. Nipponbare</strain>
    </source>
</reference>
<reference key="2">
    <citation type="journal article" date="2008" name="Nucleic Acids Res.">
        <title>The rice annotation project database (RAP-DB): 2008 update.</title>
        <authorList>
            <consortium name="The rice annotation project (RAP)"/>
        </authorList>
    </citation>
    <scope>GENOME REANNOTATION</scope>
    <source>
        <strain>cv. Nipponbare</strain>
    </source>
</reference>
<reference key="3">
    <citation type="journal article" date="2013" name="Rice">
        <title>Improvement of the Oryza sativa Nipponbare reference genome using next generation sequence and optical map data.</title>
        <authorList>
            <person name="Kawahara Y."/>
            <person name="de la Bastide M."/>
            <person name="Hamilton J.P."/>
            <person name="Kanamori H."/>
            <person name="McCombie W.R."/>
            <person name="Ouyang S."/>
            <person name="Schwartz D.C."/>
            <person name="Tanaka T."/>
            <person name="Wu J."/>
            <person name="Zhou S."/>
            <person name="Childs K.L."/>
            <person name="Davidson R.M."/>
            <person name="Lin H."/>
            <person name="Quesada-Ocampo L."/>
            <person name="Vaillancourt B."/>
            <person name="Sakai H."/>
            <person name="Lee S.S."/>
            <person name="Kim J."/>
            <person name="Numa H."/>
            <person name="Itoh T."/>
            <person name="Buell C.R."/>
            <person name="Matsumoto T."/>
        </authorList>
    </citation>
    <scope>GENOME REANNOTATION</scope>
    <source>
        <strain>cv. Nipponbare</strain>
    </source>
</reference>
<reference key="4">
    <citation type="journal article" date="2005" name="PLoS Biol.">
        <title>The genomes of Oryza sativa: a history of duplications.</title>
        <authorList>
            <person name="Yu J."/>
            <person name="Wang J."/>
            <person name="Lin W."/>
            <person name="Li S."/>
            <person name="Li H."/>
            <person name="Zhou J."/>
            <person name="Ni P."/>
            <person name="Dong W."/>
            <person name="Hu S."/>
            <person name="Zeng C."/>
            <person name="Zhang J."/>
            <person name="Zhang Y."/>
            <person name="Li R."/>
            <person name="Xu Z."/>
            <person name="Li S."/>
            <person name="Li X."/>
            <person name="Zheng H."/>
            <person name="Cong L."/>
            <person name="Lin L."/>
            <person name="Yin J."/>
            <person name="Geng J."/>
            <person name="Li G."/>
            <person name="Shi J."/>
            <person name="Liu J."/>
            <person name="Lv H."/>
            <person name="Li J."/>
            <person name="Wang J."/>
            <person name="Deng Y."/>
            <person name="Ran L."/>
            <person name="Shi X."/>
            <person name="Wang X."/>
            <person name="Wu Q."/>
            <person name="Li C."/>
            <person name="Ren X."/>
            <person name="Wang J."/>
            <person name="Wang X."/>
            <person name="Li D."/>
            <person name="Liu D."/>
            <person name="Zhang X."/>
            <person name="Ji Z."/>
            <person name="Zhao W."/>
            <person name="Sun Y."/>
            <person name="Zhang Z."/>
            <person name="Bao J."/>
            <person name="Han Y."/>
            <person name="Dong L."/>
            <person name="Ji J."/>
            <person name="Chen P."/>
            <person name="Wu S."/>
            <person name="Liu J."/>
            <person name="Xiao Y."/>
            <person name="Bu D."/>
            <person name="Tan J."/>
            <person name="Yang L."/>
            <person name="Ye C."/>
            <person name="Zhang J."/>
            <person name="Xu J."/>
            <person name="Zhou Y."/>
            <person name="Yu Y."/>
            <person name="Zhang B."/>
            <person name="Zhuang S."/>
            <person name="Wei H."/>
            <person name="Liu B."/>
            <person name="Lei M."/>
            <person name="Yu H."/>
            <person name="Li Y."/>
            <person name="Xu H."/>
            <person name="Wei S."/>
            <person name="He X."/>
            <person name="Fang L."/>
            <person name="Zhang Z."/>
            <person name="Zhang Y."/>
            <person name="Huang X."/>
            <person name="Su Z."/>
            <person name="Tong W."/>
            <person name="Li J."/>
            <person name="Tong Z."/>
            <person name="Li S."/>
            <person name="Ye J."/>
            <person name="Wang L."/>
            <person name="Fang L."/>
            <person name="Lei T."/>
            <person name="Chen C.-S."/>
            <person name="Chen H.-C."/>
            <person name="Xu Z."/>
            <person name="Li H."/>
            <person name="Huang H."/>
            <person name="Zhang F."/>
            <person name="Xu H."/>
            <person name="Li N."/>
            <person name="Zhao C."/>
            <person name="Li S."/>
            <person name="Dong L."/>
            <person name="Huang Y."/>
            <person name="Li L."/>
            <person name="Xi Y."/>
            <person name="Qi Q."/>
            <person name="Li W."/>
            <person name="Zhang B."/>
            <person name="Hu W."/>
            <person name="Zhang Y."/>
            <person name="Tian X."/>
            <person name="Jiao Y."/>
            <person name="Liang X."/>
            <person name="Jin J."/>
            <person name="Gao L."/>
            <person name="Zheng W."/>
            <person name="Hao B."/>
            <person name="Liu S.-M."/>
            <person name="Wang W."/>
            <person name="Yuan L."/>
            <person name="Cao M."/>
            <person name="McDermott J."/>
            <person name="Samudrala R."/>
            <person name="Wang J."/>
            <person name="Wong G.K.-S."/>
            <person name="Yang H."/>
        </authorList>
    </citation>
    <scope>NUCLEOTIDE SEQUENCE [LARGE SCALE GENOMIC DNA]</scope>
    <source>
        <strain>cv. Nipponbare</strain>
    </source>
</reference>
<reference key="5">
    <citation type="journal article" date="2003" name="Science">
        <title>Collection, mapping, and annotation of over 28,000 cDNA clones from japonica rice.</title>
        <authorList>
            <consortium name="The rice full-length cDNA consortium"/>
        </authorList>
    </citation>
    <scope>NUCLEOTIDE SEQUENCE [LARGE SCALE MRNA] (ISOFORMS 1 AND 2)</scope>
    <source>
        <strain>cv. Nipponbare</strain>
    </source>
</reference>
<reference key="6">
    <citation type="journal article" date="2008" name="BMC Genomics">
        <title>Genome-wide and expression analysis of protein phosphatase 2C in rice and Arabidopsis.</title>
        <authorList>
            <person name="Xue T."/>
            <person name="Wang D."/>
            <person name="Zhang S."/>
            <person name="Ehlting J."/>
            <person name="Ni F."/>
            <person name="Jacab S."/>
            <person name="Zheng C."/>
            <person name="Zhong Y."/>
        </authorList>
    </citation>
    <scope>GENE FAMILY</scope>
    <scope>NOMENCLATURE</scope>
</reference>
<accession>Q69VD9</accession>
<accession>B9FU04</accession>
<accession>Q69VD8</accession>
<organism>
    <name type="scientific">Oryza sativa subsp. japonica</name>
    <name type="common">Rice</name>
    <dbReference type="NCBI Taxonomy" id="39947"/>
    <lineage>
        <taxon>Eukaryota</taxon>
        <taxon>Viridiplantae</taxon>
        <taxon>Streptophyta</taxon>
        <taxon>Embryophyta</taxon>
        <taxon>Tracheophyta</taxon>
        <taxon>Spermatophyta</taxon>
        <taxon>Magnoliopsida</taxon>
        <taxon>Liliopsida</taxon>
        <taxon>Poales</taxon>
        <taxon>Poaceae</taxon>
        <taxon>BOP clade</taxon>
        <taxon>Oryzoideae</taxon>
        <taxon>Oryzeae</taxon>
        <taxon>Oryzinae</taxon>
        <taxon>Oryza</taxon>
        <taxon>Oryza sativa</taxon>
    </lineage>
</organism>
<comment type="catalytic activity">
    <reaction>
        <text>O-phospho-L-seryl-[protein] + H2O = L-seryl-[protein] + phosphate</text>
        <dbReference type="Rhea" id="RHEA:20629"/>
        <dbReference type="Rhea" id="RHEA-COMP:9863"/>
        <dbReference type="Rhea" id="RHEA-COMP:11604"/>
        <dbReference type="ChEBI" id="CHEBI:15377"/>
        <dbReference type="ChEBI" id="CHEBI:29999"/>
        <dbReference type="ChEBI" id="CHEBI:43474"/>
        <dbReference type="ChEBI" id="CHEBI:83421"/>
        <dbReference type="EC" id="3.1.3.16"/>
    </reaction>
</comment>
<comment type="catalytic activity">
    <reaction>
        <text>O-phospho-L-threonyl-[protein] + H2O = L-threonyl-[protein] + phosphate</text>
        <dbReference type="Rhea" id="RHEA:47004"/>
        <dbReference type="Rhea" id="RHEA-COMP:11060"/>
        <dbReference type="Rhea" id="RHEA-COMP:11605"/>
        <dbReference type="ChEBI" id="CHEBI:15377"/>
        <dbReference type="ChEBI" id="CHEBI:30013"/>
        <dbReference type="ChEBI" id="CHEBI:43474"/>
        <dbReference type="ChEBI" id="CHEBI:61977"/>
        <dbReference type="EC" id="3.1.3.16"/>
    </reaction>
</comment>
<comment type="cofactor">
    <cofactor evidence="1">
        <name>Mg(2+)</name>
        <dbReference type="ChEBI" id="CHEBI:18420"/>
    </cofactor>
    <cofactor evidence="1">
        <name>Mn(2+)</name>
        <dbReference type="ChEBI" id="CHEBI:29035"/>
    </cofactor>
    <text evidence="1">Binds 2 magnesium or manganese ions per subunit.</text>
</comment>
<comment type="alternative products">
    <event type="alternative splicing"/>
    <isoform>
        <id>Q69VD9-1</id>
        <name>1</name>
        <sequence type="displayed"/>
    </isoform>
    <isoform>
        <id>Q69VD9-2</id>
        <name>2</name>
        <sequence type="described" ref="VSP_036275"/>
    </isoform>
</comment>
<comment type="similarity">
    <text evidence="5">Belongs to the PP2C family.</text>
</comment>
<name>P2C57_ORYSJ</name>
<proteinExistence type="evidence at transcript level"/>
<gene>
    <name type="ordered locus">Os06g0597200</name>
    <name type="ordered locus">LOC_Os06g39600</name>
    <name evidence="6" type="ORF">OsJ_21867</name>
    <name type="ORF">P0417D05.18-1</name>
    <name type="ORF">P0417D05.18-2</name>
</gene>
<protein>
    <recommendedName>
        <fullName>Probable protein phosphatase 2C 57</fullName>
        <shortName>OsPP2C57</shortName>
        <ecNumber>3.1.3.16</ecNumber>
    </recommendedName>
</protein>
<dbReference type="EC" id="3.1.3.16"/>
<dbReference type="EMBL" id="AP004236">
    <property type="protein sequence ID" value="BAD33042.1"/>
    <property type="molecule type" value="Genomic_DNA"/>
</dbReference>
<dbReference type="EMBL" id="AP004236">
    <property type="protein sequence ID" value="BAD33043.1"/>
    <property type="molecule type" value="Genomic_DNA"/>
</dbReference>
<dbReference type="EMBL" id="AP008212">
    <property type="protein sequence ID" value="BAF19901.1"/>
    <property type="molecule type" value="Genomic_DNA"/>
</dbReference>
<dbReference type="EMBL" id="AP014962">
    <property type="protein sequence ID" value="BAS98469.1"/>
    <property type="molecule type" value="Genomic_DNA"/>
</dbReference>
<dbReference type="EMBL" id="CM000143">
    <property type="protein sequence ID" value="EEE65966.1"/>
    <property type="molecule type" value="Genomic_DNA"/>
</dbReference>
<dbReference type="EMBL" id="AK068472">
    <property type="status" value="NOT_ANNOTATED_CDS"/>
    <property type="molecule type" value="mRNA"/>
</dbReference>
<dbReference type="EMBL" id="AK070996">
    <property type="protein sequence ID" value="BAG92252.1"/>
    <property type="molecule type" value="mRNA"/>
</dbReference>
<dbReference type="RefSeq" id="XP_015644010.1">
    <property type="nucleotide sequence ID" value="XM_015788524.1"/>
</dbReference>
<dbReference type="RefSeq" id="XP_015644011.1">
    <property type="nucleotide sequence ID" value="XM_015788525.1"/>
</dbReference>
<dbReference type="SMR" id="Q69VD9"/>
<dbReference type="FunCoup" id="Q69VD9">
    <property type="interactions" value="20"/>
</dbReference>
<dbReference type="STRING" id="39947.Q69VD9"/>
<dbReference type="iPTMnet" id="Q69VD9"/>
<dbReference type="PaxDb" id="39947-Q69VD9"/>
<dbReference type="EnsemblPlants" id="Os06t0597200-01">
    <molecule id="Q69VD9-1"/>
    <property type="protein sequence ID" value="Os06t0597200-01"/>
    <property type="gene ID" value="Os06g0597200"/>
</dbReference>
<dbReference type="Gramene" id="Os06t0597200-01">
    <molecule id="Q69VD9-1"/>
    <property type="protein sequence ID" value="Os06t0597200-01"/>
    <property type="gene ID" value="Os06g0597200"/>
</dbReference>
<dbReference type="KEGG" id="dosa:Os06g0597200"/>
<dbReference type="eggNOG" id="KOG0698">
    <property type="taxonomic scope" value="Eukaryota"/>
</dbReference>
<dbReference type="InParanoid" id="Q69VD9"/>
<dbReference type="OMA" id="FACHHIP"/>
<dbReference type="OrthoDB" id="10264738at2759"/>
<dbReference type="Proteomes" id="UP000000763">
    <property type="component" value="Chromosome 6"/>
</dbReference>
<dbReference type="Proteomes" id="UP000007752">
    <property type="component" value="Chromosome 6"/>
</dbReference>
<dbReference type="Proteomes" id="UP000059680">
    <property type="component" value="Chromosome 6"/>
</dbReference>
<dbReference type="ExpressionAtlas" id="Q69VD9">
    <property type="expression patterns" value="baseline and differential"/>
</dbReference>
<dbReference type="GO" id="GO:0005829">
    <property type="term" value="C:cytosol"/>
    <property type="evidence" value="ECO:0007669"/>
    <property type="project" value="EnsemblPlants"/>
</dbReference>
<dbReference type="GO" id="GO:0005634">
    <property type="term" value="C:nucleus"/>
    <property type="evidence" value="ECO:0007669"/>
    <property type="project" value="EnsemblPlants"/>
</dbReference>
<dbReference type="GO" id="GO:0046872">
    <property type="term" value="F:metal ion binding"/>
    <property type="evidence" value="ECO:0007669"/>
    <property type="project" value="UniProtKB-KW"/>
</dbReference>
<dbReference type="GO" id="GO:0004722">
    <property type="term" value="F:protein serine/threonine phosphatase activity"/>
    <property type="evidence" value="ECO:0007669"/>
    <property type="project" value="UniProtKB-EC"/>
</dbReference>
<dbReference type="GO" id="GO:0050688">
    <property type="term" value="P:regulation of defense response to virus"/>
    <property type="evidence" value="ECO:0007669"/>
    <property type="project" value="EnsemblPlants"/>
</dbReference>
<dbReference type="GO" id="GO:0007165">
    <property type="term" value="P:signal transduction"/>
    <property type="evidence" value="ECO:0000318"/>
    <property type="project" value="GO_Central"/>
</dbReference>
<dbReference type="CDD" id="cd00143">
    <property type="entry name" value="PP2Cc"/>
    <property type="match status" value="1"/>
</dbReference>
<dbReference type="FunFam" id="3.60.40.10:FF:000004">
    <property type="entry name" value="Probable protein phosphatase 2C 22"/>
    <property type="match status" value="1"/>
</dbReference>
<dbReference type="Gene3D" id="3.60.40.10">
    <property type="entry name" value="PPM-type phosphatase domain"/>
    <property type="match status" value="1"/>
</dbReference>
<dbReference type="InterPro" id="IPR015655">
    <property type="entry name" value="PP2C"/>
</dbReference>
<dbReference type="InterPro" id="IPR000222">
    <property type="entry name" value="PP2C_BS"/>
</dbReference>
<dbReference type="InterPro" id="IPR036457">
    <property type="entry name" value="PPM-type-like_dom_sf"/>
</dbReference>
<dbReference type="InterPro" id="IPR001932">
    <property type="entry name" value="PPM-type_phosphatase-like_dom"/>
</dbReference>
<dbReference type="PANTHER" id="PTHR13832">
    <property type="entry name" value="PROTEIN PHOSPHATASE 2C"/>
    <property type="match status" value="1"/>
</dbReference>
<dbReference type="PANTHER" id="PTHR13832:SF790">
    <property type="entry name" value="PROTEIN PHOSPHATASE 2C 22-RELATED"/>
    <property type="match status" value="1"/>
</dbReference>
<dbReference type="Pfam" id="PF00481">
    <property type="entry name" value="PP2C"/>
    <property type="match status" value="1"/>
</dbReference>
<dbReference type="SMART" id="SM00332">
    <property type="entry name" value="PP2Cc"/>
    <property type="match status" value="1"/>
</dbReference>
<dbReference type="SUPFAM" id="SSF81606">
    <property type="entry name" value="PP2C-like"/>
    <property type="match status" value="1"/>
</dbReference>
<dbReference type="PROSITE" id="PS01032">
    <property type="entry name" value="PPM_1"/>
    <property type="match status" value="1"/>
</dbReference>
<dbReference type="PROSITE" id="PS51746">
    <property type="entry name" value="PPM_2"/>
    <property type="match status" value="1"/>
</dbReference>